<name>SYL_ECOLU</name>
<keyword id="KW-0030">Aminoacyl-tRNA synthetase</keyword>
<keyword id="KW-0067">ATP-binding</keyword>
<keyword id="KW-0963">Cytoplasm</keyword>
<keyword id="KW-0436">Ligase</keyword>
<keyword id="KW-0547">Nucleotide-binding</keyword>
<keyword id="KW-0648">Protein biosynthesis</keyword>
<organism>
    <name type="scientific">Escherichia coli O17:K52:H18 (strain UMN026 / ExPEC)</name>
    <dbReference type="NCBI Taxonomy" id="585056"/>
    <lineage>
        <taxon>Bacteria</taxon>
        <taxon>Pseudomonadati</taxon>
        <taxon>Pseudomonadota</taxon>
        <taxon>Gammaproteobacteria</taxon>
        <taxon>Enterobacterales</taxon>
        <taxon>Enterobacteriaceae</taxon>
        <taxon>Escherichia</taxon>
    </lineage>
</organism>
<sequence length="860" mass="97293">MQEQYRPEEIESKVQLHWDEKRTFEVTEDESKEKYYCLSMLPYPSGRLHMGHVRNYTIGDVIARYQRMLGKNVLQPIGWDAFGLPAEGAAVKNNTAPAPWTYDNIAYMKNQLKMLGFGYDWSRELATCTPEYYRWEQKFFTELYKKDLVYKKTSAVNWCPNDQTVLANEQVIDGCCWRCDTKVERKEIPQWFIKITAYADELLNDLDKLDHWPDTVKTMQRNWIGRSEGVEITFNVNDYDNTLTVYTTRPDTFMGCTYLAVAAGHPLAQKAAENNPELAAFIDECRNTKVAEAEMATMEKKGVDTGFKAVHPLTGEEIPVWAANFVLMEYGTGAVMAVPGHDQRDYEFASKYGLNIKPVILAADGSEPDLSQQALTEKGVLFNSGEFNGLDHEAAFNAIADKLTAMGVGERKVNYRLRDWGVSRQRYWGAPIPMVTLEDGTVMPTPDDQLPVILPEDVVMDGITSPIKADPEWAKTTVNGMPALRETDTFDTFMESSWYYARYTCPEYKEGMLDSKAANYWLPVDIYIGGIEHAIMHLLYFRFFHKLMRDAGMVNSDEPAKQLLCQGMVLADAFYYVGENGERNWVSPVDAIVERDEKGRIVKAKDAAGHELVYTGMSKMSKSKNNGIDPQVMVERYGADTVRLFMMFASPADMTLEWQESGVEGANRFLKRVWKLVYEHTAKGDVAALNVDALTEDQKALRRDVHKTIAKVTDDIGRRQTFNTAIAAIMELMNKLAKAPTDGEQDRALMQEALLAVVRMLNPFTPHICFTLWQELKGEGDIDNAPWPVADEKAMVEDSTLVVVQVNGKVRAKITVPVDATEEQVRERAGQEHLVAKYLDGVTVRKVIYVPGKLLNLVVG</sequence>
<reference key="1">
    <citation type="journal article" date="2009" name="PLoS Genet.">
        <title>Organised genome dynamics in the Escherichia coli species results in highly diverse adaptive paths.</title>
        <authorList>
            <person name="Touchon M."/>
            <person name="Hoede C."/>
            <person name="Tenaillon O."/>
            <person name="Barbe V."/>
            <person name="Baeriswyl S."/>
            <person name="Bidet P."/>
            <person name="Bingen E."/>
            <person name="Bonacorsi S."/>
            <person name="Bouchier C."/>
            <person name="Bouvet O."/>
            <person name="Calteau A."/>
            <person name="Chiapello H."/>
            <person name="Clermont O."/>
            <person name="Cruveiller S."/>
            <person name="Danchin A."/>
            <person name="Diard M."/>
            <person name="Dossat C."/>
            <person name="Karoui M.E."/>
            <person name="Frapy E."/>
            <person name="Garry L."/>
            <person name="Ghigo J.M."/>
            <person name="Gilles A.M."/>
            <person name="Johnson J."/>
            <person name="Le Bouguenec C."/>
            <person name="Lescat M."/>
            <person name="Mangenot S."/>
            <person name="Martinez-Jehanne V."/>
            <person name="Matic I."/>
            <person name="Nassif X."/>
            <person name="Oztas S."/>
            <person name="Petit M.A."/>
            <person name="Pichon C."/>
            <person name="Rouy Z."/>
            <person name="Ruf C.S."/>
            <person name="Schneider D."/>
            <person name="Tourret J."/>
            <person name="Vacherie B."/>
            <person name="Vallenet D."/>
            <person name="Medigue C."/>
            <person name="Rocha E.P.C."/>
            <person name="Denamur E."/>
        </authorList>
    </citation>
    <scope>NUCLEOTIDE SEQUENCE [LARGE SCALE GENOMIC DNA]</scope>
    <source>
        <strain>UMN026 / ExPEC</strain>
    </source>
</reference>
<evidence type="ECO:0000255" key="1">
    <source>
        <dbReference type="HAMAP-Rule" id="MF_00049"/>
    </source>
</evidence>
<protein>
    <recommendedName>
        <fullName evidence="1">Leucine--tRNA ligase</fullName>
        <ecNumber evidence="1">6.1.1.4</ecNumber>
    </recommendedName>
    <alternativeName>
        <fullName evidence="1">Leucyl-tRNA synthetase</fullName>
        <shortName evidence="1">LeuRS</shortName>
    </alternativeName>
</protein>
<gene>
    <name evidence="1" type="primary">leuS</name>
    <name type="ordered locus">ECUMN_0736</name>
</gene>
<feature type="chain" id="PRO_1000199202" description="Leucine--tRNA ligase">
    <location>
        <begin position="1"/>
        <end position="860"/>
    </location>
</feature>
<feature type="short sequence motif" description="'HIGH' region">
    <location>
        <begin position="42"/>
        <end position="52"/>
    </location>
</feature>
<feature type="short sequence motif" description="'KMSKS' region">
    <location>
        <begin position="619"/>
        <end position="623"/>
    </location>
</feature>
<feature type="binding site" evidence="1">
    <location>
        <position position="622"/>
    </location>
    <ligand>
        <name>ATP</name>
        <dbReference type="ChEBI" id="CHEBI:30616"/>
    </ligand>
</feature>
<accession>B7N9P8</accession>
<comment type="catalytic activity">
    <reaction evidence="1">
        <text>tRNA(Leu) + L-leucine + ATP = L-leucyl-tRNA(Leu) + AMP + diphosphate</text>
        <dbReference type="Rhea" id="RHEA:11688"/>
        <dbReference type="Rhea" id="RHEA-COMP:9613"/>
        <dbReference type="Rhea" id="RHEA-COMP:9622"/>
        <dbReference type="ChEBI" id="CHEBI:30616"/>
        <dbReference type="ChEBI" id="CHEBI:33019"/>
        <dbReference type="ChEBI" id="CHEBI:57427"/>
        <dbReference type="ChEBI" id="CHEBI:78442"/>
        <dbReference type="ChEBI" id="CHEBI:78494"/>
        <dbReference type="ChEBI" id="CHEBI:456215"/>
        <dbReference type="EC" id="6.1.1.4"/>
    </reaction>
</comment>
<comment type="subcellular location">
    <subcellularLocation>
        <location evidence="1">Cytoplasm</location>
    </subcellularLocation>
</comment>
<comment type="similarity">
    <text evidence="1">Belongs to the class-I aminoacyl-tRNA synthetase family.</text>
</comment>
<proteinExistence type="inferred from homology"/>
<dbReference type="EC" id="6.1.1.4" evidence="1"/>
<dbReference type="EMBL" id="CU928163">
    <property type="protein sequence ID" value="CAR11949.1"/>
    <property type="molecule type" value="Genomic_DNA"/>
</dbReference>
<dbReference type="RefSeq" id="WP_001309340.1">
    <property type="nucleotide sequence ID" value="NC_011751.1"/>
</dbReference>
<dbReference type="RefSeq" id="YP_002411495.1">
    <property type="nucleotide sequence ID" value="NC_011751.1"/>
</dbReference>
<dbReference type="SMR" id="B7N9P8"/>
<dbReference type="STRING" id="585056.ECUMN_0736"/>
<dbReference type="KEGG" id="eum:ECUMN_0736"/>
<dbReference type="PATRIC" id="fig|585056.7.peg.934"/>
<dbReference type="HOGENOM" id="CLU_004427_0_0_6"/>
<dbReference type="Proteomes" id="UP000007097">
    <property type="component" value="Chromosome"/>
</dbReference>
<dbReference type="GO" id="GO:0005829">
    <property type="term" value="C:cytosol"/>
    <property type="evidence" value="ECO:0007669"/>
    <property type="project" value="TreeGrafter"/>
</dbReference>
<dbReference type="GO" id="GO:0002161">
    <property type="term" value="F:aminoacyl-tRNA deacylase activity"/>
    <property type="evidence" value="ECO:0007669"/>
    <property type="project" value="InterPro"/>
</dbReference>
<dbReference type="GO" id="GO:0005524">
    <property type="term" value="F:ATP binding"/>
    <property type="evidence" value="ECO:0007669"/>
    <property type="project" value="UniProtKB-UniRule"/>
</dbReference>
<dbReference type="GO" id="GO:0004823">
    <property type="term" value="F:leucine-tRNA ligase activity"/>
    <property type="evidence" value="ECO:0007669"/>
    <property type="project" value="UniProtKB-UniRule"/>
</dbReference>
<dbReference type="GO" id="GO:0006429">
    <property type="term" value="P:leucyl-tRNA aminoacylation"/>
    <property type="evidence" value="ECO:0007669"/>
    <property type="project" value="UniProtKB-UniRule"/>
</dbReference>
<dbReference type="CDD" id="cd07958">
    <property type="entry name" value="Anticodon_Ia_Leu_BEm"/>
    <property type="match status" value="1"/>
</dbReference>
<dbReference type="CDD" id="cd00812">
    <property type="entry name" value="LeuRS_core"/>
    <property type="match status" value="1"/>
</dbReference>
<dbReference type="FunFam" id="1.10.730.10:FF:000002">
    <property type="entry name" value="Leucine--tRNA ligase"/>
    <property type="match status" value="2"/>
</dbReference>
<dbReference type="FunFam" id="2.20.28.290:FF:000001">
    <property type="entry name" value="Leucine--tRNA ligase"/>
    <property type="match status" value="1"/>
</dbReference>
<dbReference type="FunFam" id="3.10.20.590:FF:000001">
    <property type="entry name" value="Leucine--tRNA ligase"/>
    <property type="match status" value="1"/>
</dbReference>
<dbReference type="FunFam" id="3.40.50.620:FF:000003">
    <property type="entry name" value="Leucine--tRNA ligase"/>
    <property type="match status" value="1"/>
</dbReference>
<dbReference type="FunFam" id="3.40.50.620:FF:000124">
    <property type="entry name" value="Leucine--tRNA ligase"/>
    <property type="match status" value="1"/>
</dbReference>
<dbReference type="FunFam" id="3.90.740.10:FF:000012">
    <property type="entry name" value="Leucine--tRNA ligase"/>
    <property type="match status" value="1"/>
</dbReference>
<dbReference type="Gene3D" id="2.20.28.290">
    <property type="match status" value="1"/>
</dbReference>
<dbReference type="Gene3D" id="3.10.20.590">
    <property type="match status" value="1"/>
</dbReference>
<dbReference type="Gene3D" id="3.40.50.620">
    <property type="entry name" value="HUPs"/>
    <property type="match status" value="2"/>
</dbReference>
<dbReference type="Gene3D" id="1.10.730.10">
    <property type="entry name" value="Isoleucyl-tRNA Synthetase, Domain 1"/>
    <property type="match status" value="1"/>
</dbReference>
<dbReference type="HAMAP" id="MF_00049_B">
    <property type="entry name" value="Leu_tRNA_synth_B"/>
    <property type="match status" value="1"/>
</dbReference>
<dbReference type="InterPro" id="IPR001412">
    <property type="entry name" value="aa-tRNA-synth_I_CS"/>
</dbReference>
<dbReference type="InterPro" id="IPR002300">
    <property type="entry name" value="aa-tRNA-synth_Ia"/>
</dbReference>
<dbReference type="InterPro" id="IPR002302">
    <property type="entry name" value="Leu-tRNA-ligase"/>
</dbReference>
<dbReference type="InterPro" id="IPR025709">
    <property type="entry name" value="Leu_tRNA-synth_edit"/>
</dbReference>
<dbReference type="InterPro" id="IPR013155">
    <property type="entry name" value="M/V/L/I-tRNA-synth_anticd-bd"/>
</dbReference>
<dbReference type="InterPro" id="IPR015413">
    <property type="entry name" value="Methionyl/Leucyl_tRNA_Synth"/>
</dbReference>
<dbReference type="InterPro" id="IPR014729">
    <property type="entry name" value="Rossmann-like_a/b/a_fold"/>
</dbReference>
<dbReference type="InterPro" id="IPR009080">
    <property type="entry name" value="tRNAsynth_Ia_anticodon-bd"/>
</dbReference>
<dbReference type="InterPro" id="IPR009008">
    <property type="entry name" value="Val/Leu/Ile-tRNA-synth_edit"/>
</dbReference>
<dbReference type="NCBIfam" id="TIGR00396">
    <property type="entry name" value="leuS_bact"/>
    <property type="match status" value="1"/>
</dbReference>
<dbReference type="PANTHER" id="PTHR43740:SF2">
    <property type="entry name" value="LEUCINE--TRNA LIGASE, MITOCHONDRIAL"/>
    <property type="match status" value="1"/>
</dbReference>
<dbReference type="PANTHER" id="PTHR43740">
    <property type="entry name" value="LEUCYL-TRNA SYNTHETASE"/>
    <property type="match status" value="1"/>
</dbReference>
<dbReference type="Pfam" id="PF08264">
    <property type="entry name" value="Anticodon_1"/>
    <property type="match status" value="1"/>
</dbReference>
<dbReference type="Pfam" id="PF00133">
    <property type="entry name" value="tRNA-synt_1"/>
    <property type="match status" value="2"/>
</dbReference>
<dbReference type="Pfam" id="PF13603">
    <property type="entry name" value="tRNA-synt_1_2"/>
    <property type="match status" value="1"/>
</dbReference>
<dbReference type="Pfam" id="PF09334">
    <property type="entry name" value="tRNA-synt_1g"/>
    <property type="match status" value="1"/>
</dbReference>
<dbReference type="PRINTS" id="PR00985">
    <property type="entry name" value="TRNASYNTHLEU"/>
</dbReference>
<dbReference type="SUPFAM" id="SSF47323">
    <property type="entry name" value="Anticodon-binding domain of a subclass of class I aminoacyl-tRNA synthetases"/>
    <property type="match status" value="1"/>
</dbReference>
<dbReference type="SUPFAM" id="SSF52374">
    <property type="entry name" value="Nucleotidylyl transferase"/>
    <property type="match status" value="1"/>
</dbReference>
<dbReference type="SUPFAM" id="SSF50677">
    <property type="entry name" value="ValRS/IleRS/LeuRS editing domain"/>
    <property type="match status" value="1"/>
</dbReference>
<dbReference type="PROSITE" id="PS00178">
    <property type="entry name" value="AA_TRNA_LIGASE_I"/>
    <property type="match status" value="1"/>
</dbReference>